<name>MNMG_ALLAM</name>
<accession>B9JV52</accession>
<organism>
    <name type="scientific">Allorhizobium ampelinum (strain ATCC BAA-846 / DSM 112012 / S4)</name>
    <name type="common">Agrobacterium vitis (strain S4)</name>
    <dbReference type="NCBI Taxonomy" id="311402"/>
    <lineage>
        <taxon>Bacteria</taxon>
        <taxon>Pseudomonadati</taxon>
        <taxon>Pseudomonadota</taxon>
        <taxon>Alphaproteobacteria</taxon>
        <taxon>Hyphomicrobiales</taxon>
        <taxon>Rhizobiaceae</taxon>
        <taxon>Rhizobium/Agrobacterium group</taxon>
        <taxon>Allorhizobium</taxon>
        <taxon>Allorhizobium ampelinum</taxon>
    </lineage>
</organism>
<sequence length="621" mass="67682">MPRRFDVIVIGGGHAGSEAAYASARLGARTCLVTHRRDTIGVMSCNPAIGGLGKGHLVREIDALGGLMGRCADAAGIQFRLLNRKKGPAVRGPRTQADRKLYRQAVQNVLFNHPQLEIIEGDVFDLNVENGTVKGVILADGQSLPSASVILTSGTFLRGLIHIGQTKIPAGRVGEAPSLGLSATLGRLGLRLGRLKTGTPARLDGRTIDWAQLEMQAADEQPVPFSFMTDRITNRQIECGITRTTAATHTIIRDNIHLSAMYSGQIEGVGPRYCPSIEDKISRFGDRDGHQVFLEPEGLDDHTVYPNGISTSLPESVQKEFMRTLPGLENVTILQSAYAIEYDHIDPRELSASLELKRLSGLYLAGQINGTTGYEEAAAQGLVAGLNAARTAGGQDVVHFSRAQSYIGVMIDDLISHGVTEPYRMFTSRAEFRLSLRADNADMRLTPIGIALGCIASDQEKRFKDYRHQIDDTINMLETRKLTPNEAAAVGIPVNQDGRRRTALELLAYPDISIADLSRLWPELDALDSKVAEAVEIHATYAVYMDRQNADIAATKRDEDRLIPKDFDYASLSGLSNELKQKLEKTRPENLSQAAKVEGMTPAAISLLIAFLNKGMLRHVG</sequence>
<dbReference type="EMBL" id="CP000633">
    <property type="protein sequence ID" value="ACM38190.1"/>
    <property type="molecule type" value="Genomic_DNA"/>
</dbReference>
<dbReference type="SMR" id="B9JV52"/>
<dbReference type="STRING" id="311402.Avi_4389"/>
<dbReference type="KEGG" id="avi:Avi_4389"/>
<dbReference type="eggNOG" id="COG0445">
    <property type="taxonomic scope" value="Bacteria"/>
</dbReference>
<dbReference type="HOGENOM" id="CLU_007831_2_2_5"/>
<dbReference type="Proteomes" id="UP000001596">
    <property type="component" value="Chromosome 1"/>
</dbReference>
<dbReference type="GO" id="GO:0005829">
    <property type="term" value="C:cytosol"/>
    <property type="evidence" value="ECO:0007669"/>
    <property type="project" value="TreeGrafter"/>
</dbReference>
<dbReference type="GO" id="GO:0050660">
    <property type="term" value="F:flavin adenine dinucleotide binding"/>
    <property type="evidence" value="ECO:0007669"/>
    <property type="project" value="UniProtKB-UniRule"/>
</dbReference>
<dbReference type="GO" id="GO:0030488">
    <property type="term" value="P:tRNA methylation"/>
    <property type="evidence" value="ECO:0007669"/>
    <property type="project" value="TreeGrafter"/>
</dbReference>
<dbReference type="GO" id="GO:0002098">
    <property type="term" value="P:tRNA wobble uridine modification"/>
    <property type="evidence" value="ECO:0007669"/>
    <property type="project" value="InterPro"/>
</dbReference>
<dbReference type="FunFam" id="3.50.50.60:FF:000082">
    <property type="entry name" value="protein MTO1 homolog, mitochondrial isoform X1"/>
    <property type="match status" value="1"/>
</dbReference>
<dbReference type="FunFam" id="1.10.150.570:FF:000001">
    <property type="entry name" value="tRNA uridine 5-carboxymethylaminomethyl modification enzyme MnmG"/>
    <property type="match status" value="1"/>
</dbReference>
<dbReference type="FunFam" id="3.50.50.60:FF:000002">
    <property type="entry name" value="tRNA uridine 5-carboxymethylaminomethyl modification enzyme MnmG"/>
    <property type="match status" value="1"/>
</dbReference>
<dbReference type="Gene3D" id="3.50.50.60">
    <property type="entry name" value="FAD/NAD(P)-binding domain"/>
    <property type="match status" value="2"/>
</dbReference>
<dbReference type="Gene3D" id="1.10.150.570">
    <property type="entry name" value="GidA associated domain, C-terminal subdomain"/>
    <property type="match status" value="1"/>
</dbReference>
<dbReference type="Gene3D" id="1.10.10.1800">
    <property type="entry name" value="tRNA uridine 5-carboxymethylaminomethyl modification enzyme MnmG/GidA"/>
    <property type="match status" value="1"/>
</dbReference>
<dbReference type="HAMAP" id="MF_00129">
    <property type="entry name" value="MnmG_GidA"/>
    <property type="match status" value="1"/>
</dbReference>
<dbReference type="InterPro" id="IPR036188">
    <property type="entry name" value="FAD/NAD-bd_sf"/>
</dbReference>
<dbReference type="InterPro" id="IPR049312">
    <property type="entry name" value="GIDA_C_N"/>
</dbReference>
<dbReference type="InterPro" id="IPR004416">
    <property type="entry name" value="MnmG"/>
</dbReference>
<dbReference type="InterPro" id="IPR002218">
    <property type="entry name" value="MnmG-rel"/>
</dbReference>
<dbReference type="InterPro" id="IPR020595">
    <property type="entry name" value="MnmG-rel_CS"/>
</dbReference>
<dbReference type="InterPro" id="IPR026904">
    <property type="entry name" value="MnmG_C"/>
</dbReference>
<dbReference type="InterPro" id="IPR047001">
    <property type="entry name" value="MnmG_C_subdom"/>
</dbReference>
<dbReference type="InterPro" id="IPR044920">
    <property type="entry name" value="MnmG_C_subdom_sf"/>
</dbReference>
<dbReference type="InterPro" id="IPR040131">
    <property type="entry name" value="MnmG_N"/>
</dbReference>
<dbReference type="NCBIfam" id="TIGR00136">
    <property type="entry name" value="mnmG_gidA"/>
    <property type="match status" value="1"/>
</dbReference>
<dbReference type="PANTHER" id="PTHR11806">
    <property type="entry name" value="GLUCOSE INHIBITED DIVISION PROTEIN A"/>
    <property type="match status" value="1"/>
</dbReference>
<dbReference type="PANTHER" id="PTHR11806:SF0">
    <property type="entry name" value="PROTEIN MTO1 HOMOLOG, MITOCHONDRIAL"/>
    <property type="match status" value="1"/>
</dbReference>
<dbReference type="Pfam" id="PF01134">
    <property type="entry name" value="GIDA"/>
    <property type="match status" value="1"/>
</dbReference>
<dbReference type="Pfam" id="PF21680">
    <property type="entry name" value="GIDA_C_1st"/>
    <property type="match status" value="1"/>
</dbReference>
<dbReference type="Pfam" id="PF13932">
    <property type="entry name" value="SAM_GIDA_C"/>
    <property type="match status" value="1"/>
</dbReference>
<dbReference type="SMART" id="SM01228">
    <property type="entry name" value="GIDA_assoc_3"/>
    <property type="match status" value="1"/>
</dbReference>
<dbReference type="SUPFAM" id="SSF51905">
    <property type="entry name" value="FAD/NAD(P)-binding domain"/>
    <property type="match status" value="1"/>
</dbReference>
<dbReference type="PROSITE" id="PS01280">
    <property type="entry name" value="GIDA_1"/>
    <property type="match status" value="1"/>
</dbReference>
<dbReference type="PROSITE" id="PS01281">
    <property type="entry name" value="GIDA_2"/>
    <property type="match status" value="1"/>
</dbReference>
<evidence type="ECO:0000255" key="1">
    <source>
        <dbReference type="HAMAP-Rule" id="MF_00129"/>
    </source>
</evidence>
<proteinExistence type="inferred from homology"/>
<comment type="function">
    <text evidence="1">NAD-binding protein involved in the addition of a carboxymethylaminomethyl (cmnm) group at the wobble position (U34) of certain tRNAs, forming tRNA-cmnm(5)s(2)U34.</text>
</comment>
<comment type="cofactor">
    <cofactor evidence="1">
        <name>FAD</name>
        <dbReference type="ChEBI" id="CHEBI:57692"/>
    </cofactor>
</comment>
<comment type="subunit">
    <text evidence="1">Homodimer. Heterotetramer of two MnmE and two MnmG subunits.</text>
</comment>
<comment type="subcellular location">
    <subcellularLocation>
        <location evidence="1">Cytoplasm</location>
    </subcellularLocation>
</comment>
<comment type="similarity">
    <text evidence="1">Belongs to the MnmG family.</text>
</comment>
<feature type="chain" id="PRO_1000122740" description="tRNA uridine 5-carboxymethylaminomethyl modification enzyme MnmG">
    <location>
        <begin position="1"/>
        <end position="621"/>
    </location>
</feature>
<feature type="binding site" evidence="1">
    <location>
        <begin position="11"/>
        <end position="16"/>
    </location>
    <ligand>
        <name>FAD</name>
        <dbReference type="ChEBI" id="CHEBI:57692"/>
    </ligand>
</feature>
<feature type="binding site" evidence="1">
    <location>
        <position position="123"/>
    </location>
    <ligand>
        <name>FAD</name>
        <dbReference type="ChEBI" id="CHEBI:57692"/>
    </ligand>
</feature>
<feature type="binding site" evidence="1">
    <location>
        <position position="178"/>
    </location>
    <ligand>
        <name>FAD</name>
        <dbReference type="ChEBI" id="CHEBI:57692"/>
    </ligand>
</feature>
<feature type="binding site" evidence="1">
    <location>
        <begin position="270"/>
        <end position="284"/>
    </location>
    <ligand>
        <name>NAD(+)</name>
        <dbReference type="ChEBI" id="CHEBI:57540"/>
    </ligand>
</feature>
<feature type="binding site" evidence="1">
    <location>
        <position position="367"/>
    </location>
    <ligand>
        <name>FAD</name>
        <dbReference type="ChEBI" id="CHEBI:57692"/>
    </ligand>
</feature>
<protein>
    <recommendedName>
        <fullName evidence="1">tRNA uridine 5-carboxymethylaminomethyl modification enzyme MnmG</fullName>
    </recommendedName>
    <alternativeName>
        <fullName evidence="1">Glucose-inhibited division protein A</fullName>
    </alternativeName>
</protein>
<reference key="1">
    <citation type="journal article" date="2009" name="J. Bacteriol.">
        <title>Genome sequences of three Agrobacterium biovars help elucidate the evolution of multichromosome genomes in bacteria.</title>
        <authorList>
            <person name="Slater S.C."/>
            <person name="Goldman B.S."/>
            <person name="Goodner B."/>
            <person name="Setubal J.C."/>
            <person name="Farrand S.K."/>
            <person name="Nester E.W."/>
            <person name="Burr T.J."/>
            <person name="Banta L."/>
            <person name="Dickerman A.W."/>
            <person name="Paulsen I."/>
            <person name="Otten L."/>
            <person name="Suen G."/>
            <person name="Welch R."/>
            <person name="Almeida N.F."/>
            <person name="Arnold F."/>
            <person name="Burton O.T."/>
            <person name="Du Z."/>
            <person name="Ewing A."/>
            <person name="Godsy E."/>
            <person name="Heisel S."/>
            <person name="Houmiel K.L."/>
            <person name="Jhaveri J."/>
            <person name="Lu J."/>
            <person name="Miller N.M."/>
            <person name="Norton S."/>
            <person name="Chen Q."/>
            <person name="Phoolcharoen W."/>
            <person name="Ohlin V."/>
            <person name="Ondrusek D."/>
            <person name="Pride N."/>
            <person name="Stricklin S.L."/>
            <person name="Sun J."/>
            <person name="Wheeler C."/>
            <person name="Wilson L."/>
            <person name="Zhu H."/>
            <person name="Wood D.W."/>
        </authorList>
    </citation>
    <scope>NUCLEOTIDE SEQUENCE [LARGE SCALE GENOMIC DNA]</scope>
    <source>
        <strain>ATCC BAA-846 / DSM 112012 / S4</strain>
    </source>
</reference>
<keyword id="KW-0963">Cytoplasm</keyword>
<keyword id="KW-0274">FAD</keyword>
<keyword id="KW-0285">Flavoprotein</keyword>
<keyword id="KW-0520">NAD</keyword>
<keyword id="KW-1185">Reference proteome</keyword>
<keyword id="KW-0819">tRNA processing</keyword>
<gene>
    <name evidence="1" type="primary">mnmG</name>
    <name evidence="1" type="synonym">gidA</name>
    <name type="ordered locus">Avi_4389</name>
</gene>